<reference key="1">
    <citation type="journal article" date="2004" name="Science">
        <title>The Ashbya gossypii genome as a tool for mapping the ancient Saccharomyces cerevisiae genome.</title>
        <authorList>
            <person name="Dietrich F.S."/>
            <person name="Voegeli S."/>
            <person name="Brachat S."/>
            <person name="Lerch A."/>
            <person name="Gates K."/>
            <person name="Steiner S."/>
            <person name="Mohr C."/>
            <person name="Poehlmann R."/>
            <person name="Luedi P."/>
            <person name="Choi S."/>
            <person name="Wing R.A."/>
            <person name="Flavier A."/>
            <person name="Gaffney T.D."/>
            <person name="Philippsen P."/>
        </authorList>
    </citation>
    <scope>NUCLEOTIDE SEQUENCE [LARGE SCALE GENOMIC DNA]</scope>
    <source>
        <strain>ATCC 10895 / CBS 109.51 / FGSC 9923 / NRRL Y-1056</strain>
    </source>
</reference>
<reference key="2">
    <citation type="journal article" date="2013" name="G3 (Bethesda)">
        <title>Genomes of Ashbya fungi isolated from insects reveal four mating-type loci, numerous translocations, lack of transposons, and distinct gene duplications.</title>
        <authorList>
            <person name="Dietrich F.S."/>
            <person name="Voegeli S."/>
            <person name="Kuo S."/>
            <person name="Philippsen P."/>
        </authorList>
    </citation>
    <scope>GENOME REANNOTATION</scope>
    <source>
        <strain>ATCC 10895 / CBS 109.51 / FGSC 9923 / NRRL Y-1056</strain>
    </source>
</reference>
<protein>
    <recommendedName>
        <fullName>U2 small nuclear ribonucleoprotein A'</fullName>
        <shortName>U2 snRNP A'</shortName>
    </recommendedName>
</protein>
<accession>Q755D2</accession>
<organism>
    <name type="scientific">Eremothecium gossypii (strain ATCC 10895 / CBS 109.51 / FGSC 9923 / NRRL Y-1056)</name>
    <name type="common">Yeast</name>
    <name type="synonym">Ashbya gossypii</name>
    <dbReference type="NCBI Taxonomy" id="284811"/>
    <lineage>
        <taxon>Eukaryota</taxon>
        <taxon>Fungi</taxon>
        <taxon>Dikarya</taxon>
        <taxon>Ascomycota</taxon>
        <taxon>Saccharomycotina</taxon>
        <taxon>Saccharomycetes</taxon>
        <taxon>Saccharomycetales</taxon>
        <taxon>Saccharomycetaceae</taxon>
        <taxon>Eremothecium</taxon>
    </lineage>
</organism>
<dbReference type="EMBL" id="AE016819">
    <property type="protein sequence ID" value="AAS53265.1"/>
    <property type="molecule type" value="Genomic_DNA"/>
</dbReference>
<dbReference type="RefSeq" id="NP_985441.1">
    <property type="nucleotide sequence ID" value="NM_210795.1"/>
</dbReference>
<dbReference type="SMR" id="Q755D2"/>
<dbReference type="FunCoup" id="Q755D2">
    <property type="interactions" value="1335"/>
</dbReference>
<dbReference type="STRING" id="284811.Q755D2"/>
<dbReference type="EnsemblFungi" id="AAS53265">
    <property type="protein sequence ID" value="AAS53265"/>
    <property type="gene ID" value="AGOS_AFL109W"/>
</dbReference>
<dbReference type="GeneID" id="4621668"/>
<dbReference type="KEGG" id="ago:AGOS_AFL109W"/>
<dbReference type="eggNOG" id="KOG1644">
    <property type="taxonomic scope" value="Eukaryota"/>
</dbReference>
<dbReference type="HOGENOM" id="CLU_061027_3_0_1"/>
<dbReference type="InParanoid" id="Q755D2"/>
<dbReference type="OMA" id="CHLEDYR"/>
<dbReference type="OrthoDB" id="433501at2759"/>
<dbReference type="Proteomes" id="UP000000591">
    <property type="component" value="Chromosome VI"/>
</dbReference>
<dbReference type="GO" id="GO:0000974">
    <property type="term" value="C:Prp19 complex"/>
    <property type="evidence" value="ECO:0007669"/>
    <property type="project" value="EnsemblFungi"/>
</dbReference>
<dbReference type="GO" id="GO:0005686">
    <property type="term" value="C:U2 snRNP"/>
    <property type="evidence" value="ECO:0000318"/>
    <property type="project" value="GO_Central"/>
</dbReference>
<dbReference type="GO" id="GO:0071004">
    <property type="term" value="C:U2-type prespliceosome"/>
    <property type="evidence" value="ECO:0007669"/>
    <property type="project" value="EnsemblFungi"/>
</dbReference>
<dbReference type="GO" id="GO:0030620">
    <property type="term" value="F:U2 snRNA binding"/>
    <property type="evidence" value="ECO:0000318"/>
    <property type="project" value="GO_Central"/>
</dbReference>
<dbReference type="GO" id="GO:0000398">
    <property type="term" value="P:mRNA splicing, via spliceosome"/>
    <property type="evidence" value="ECO:0000318"/>
    <property type="project" value="GO_Central"/>
</dbReference>
<dbReference type="FunFam" id="3.80.10.10:FF:000629">
    <property type="entry name" value="U2 snRNP component"/>
    <property type="match status" value="1"/>
</dbReference>
<dbReference type="Gene3D" id="3.80.10.10">
    <property type="entry name" value="Ribonuclease Inhibitor"/>
    <property type="match status" value="1"/>
</dbReference>
<dbReference type="InterPro" id="IPR032675">
    <property type="entry name" value="LRR_dom_sf"/>
</dbReference>
<dbReference type="InterPro" id="IPR044640">
    <property type="entry name" value="RU2A"/>
</dbReference>
<dbReference type="PANTHER" id="PTHR10552">
    <property type="entry name" value="U2 SMALL NUCLEAR RIBONUCLEOPROTEIN A"/>
    <property type="match status" value="1"/>
</dbReference>
<dbReference type="PANTHER" id="PTHR10552:SF6">
    <property type="entry name" value="U2 SMALL NUCLEAR RIBONUCLEOPROTEIN A"/>
    <property type="match status" value="1"/>
</dbReference>
<dbReference type="Pfam" id="PF14580">
    <property type="entry name" value="LRR_9"/>
    <property type="match status" value="1"/>
</dbReference>
<dbReference type="SUPFAM" id="SSF52058">
    <property type="entry name" value="L domain-like"/>
    <property type="match status" value="1"/>
</dbReference>
<comment type="function">
    <text evidence="1">Involved in pre-mRNA splicing.</text>
</comment>
<comment type="subunit">
    <text evidence="1">Associated with the spliceosome.</text>
</comment>
<comment type="subcellular location">
    <subcellularLocation>
        <location evidence="1">Nucleus</location>
    </subcellularLocation>
</comment>
<comment type="similarity">
    <text evidence="3">Belongs to the U2 small nuclear ribonucleoprotein A family.</text>
</comment>
<gene>
    <name type="primary">LEA1</name>
    <name type="ordered locus">AFL109W</name>
</gene>
<feature type="chain" id="PRO_0000074179" description="U2 small nuclear ribonucleoprotein A'">
    <location>
        <begin position="1"/>
        <end position="237"/>
    </location>
</feature>
<feature type="repeat" description="LRR 1">
    <location>
        <begin position="53"/>
        <end position="74"/>
    </location>
</feature>
<feature type="repeat" description="LRR 2">
    <location>
        <begin position="75"/>
        <end position="95"/>
    </location>
</feature>
<feature type="repeat" description="LRR 3">
    <location>
        <begin position="97"/>
        <end position="118"/>
    </location>
</feature>
<feature type="domain" description="LRRCT">
    <location>
        <begin position="132"/>
        <end position="170"/>
    </location>
</feature>
<feature type="region of interest" description="Disordered" evidence="2">
    <location>
        <begin position="161"/>
        <end position="182"/>
    </location>
</feature>
<keyword id="KW-0433">Leucine-rich repeat</keyword>
<keyword id="KW-0507">mRNA processing</keyword>
<keyword id="KW-0508">mRNA splicing</keyword>
<keyword id="KW-0539">Nucleus</keyword>
<keyword id="KW-1185">Reference proteome</keyword>
<keyword id="KW-0677">Repeat</keyword>
<keyword id="KW-0747">Spliceosome</keyword>
<name>RU2A_EREGS</name>
<evidence type="ECO:0000250" key="1"/>
<evidence type="ECO:0000256" key="2">
    <source>
        <dbReference type="SAM" id="MobiDB-lite"/>
    </source>
</evidence>
<evidence type="ECO:0000305" key="3"/>
<sequence length="237" mass="26866">MKLTPASILEAPVYYADHIHGKYDVDKVVILRDCGYVSENEIMPQTLKLLPERTNIVDFTNNELEELPPLGHNDTVHTLLLSRNRLGRLDASRLPRYLVNLNLAMNRFEKFEQLQGLRSAPKTLKNLNLRGNVICHKEQYRETVIALCPQLAVLDGERVRQAERQAAPQNEKTDTPTEGPQPVALQATSEKELQLMDHVVNKMDKDTLEDIKQQLAKATTLAEIERLEKLLSGGVIQ</sequence>
<proteinExistence type="inferred from homology"/>